<comment type="function">
    <text evidence="1 3">May serve as an anchoring protein that mediates the subcellular compartmentation of protein kinase A (PKA) via binding to PRKAR2A (By similarity). May function as a repressor of calcineurin-mediated transcriptional activity. May attenuate calcineurin ability to induce slow-fiber gene program in muscle and may negatively modulate skeletal muscle regeneration (By similarity). Plays a role in the assembly of ryanodine receptor (RYR2) clusters in striated muscle (By similarity).</text>
</comment>
<comment type="subunit">
    <text evidence="1 3 11 13">Interacts with PRKAR2A. Interacts with ACTN2 and DTNBP1/dysbindin (By similarity). Interacts with DES (PubMed:17872945). Interacts with DMD/dystrophin (By similarity). Interacts with the calcineurin catalytic subunit PPP3CA (By similarity). Interacts with TTN (PubMed:20634290). Interacts with CAPN3; this interaction, which results in CMYA5 proteolysis, may protect CAPN3 from autolysis (PubMed:20634290). Interacts with FSD2 (By similarity). Identified in a complex composed of FSD2, CMYA5 and RYR2 (By similarity).</text>
</comment>
<comment type="subcellular location">
    <subcellularLocation>
        <location evidence="2">Nucleus</location>
    </subcellularLocation>
    <subcellularLocation>
        <location evidence="2">Sarcoplasmic reticulum</location>
    </subcellularLocation>
    <subcellularLocation>
        <location evidence="3">Cytoplasm</location>
    </subcellularLocation>
    <subcellularLocation>
        <location evidence="2">Cytoplasm</location>
        <location evidence="2">Perinuclear region</location>
    </subcellularLocation>
    <subcellularLocation>
        <location evidence="13">Cytoplasm</location>
        <location evidence="13">Myofibril</location>
        <location evidence="13">Sarcomere</location>
        <location evidence="13">M line</location>
    </subcellularLocation>
    <text evidence="2">Found predominantly at the periphery of the nucleus but also throughout the cell. Localized in lysosomes (By similarity). In skeletal muscles, localizes along myofiber periphery, at costameres (By similarity). Predominantly flanks Z-disks (By similarity). Occasionally present at the M-band level. Colocalized with RYR2 in the sarcoplasmic reticulum (By similarity).</text>
</comment>
<comment type="tissue specificity">
    <text evidence="8">Expressed in skeletal muscle; at a strong level and in heart.</text>
</comment>
<comment type="induction">
    <text evidence="8 9">Down-regulated in muscle cell lines derived from patients with Duchenne muscular dystrophy (DMD).</text>
</comment>
<comment type="domain">
    <text>Amphipathic helix regions act as an anchoring domain for PKA, and appear to be responsible of the interaction between myospryn and PRKAR2A.</text>
</comment>
<comment type="PTM">
    <text evidence="1">Phosphorylated by PKA.</text>
</comment>
<comment type="sequence caution" evidence="16">
    <conflict type="miscellaneous discrepancy">
        <sequence resource="EMBL-CDS" id="AAD55265"/>
    </conflict>
    <text>Contaminating sequence. Potential poly-A sequence.</text>
</comment>
<comment type="sequence caution" evidence="16">
    <conflict type="miscellaneous discrepancy">
        <sequence resource="EMBL-CDS" id="AAH20856"/>
    </conflict>
    <text>Contaminating sequence. Potential poly-A sequence.</text>
</comment>
<comment type="sequence caution" evidence="16">
    <conflict type="miscellaneous discrepancy">
        <sequence resource="EMBL-CDS" id="AAH22422"/>
    </conflict>
    <text>Contaminating sequence. Potential poly-A sequence.</text>
</comment>
<comment type="sequence caution" evidence="16">
    <conflict type="miscellaneous discrepancy">
        <sequence resource="EMBL-CDS" id="AAH62664"/>
    </conflict>
    <text>Contaminating sequence. Potential poly-A sequence.</text>
</comment>
<comment type="sequence caution" evidence="16">
    <conflict type="miscellaneous discrepancy">
        <sequence resource="EMBL-CDS" id="AAH63134"/>
    </conflict>
    <text>Contaminating sequence. Potential poly-A sequence.</text>
</comment>
<comment type="sequence caution" evidence="16">
    <conflict type="erroneous termination">
        <sequence resource="EMBL-CDS" id="AAI11530"/>
    </conflict>
    <text>Truncated C-terminus.</text>
</comment>
<comment type="sequence caution" evidence="16">
    <conflict type="erroneous initiation">
        <sequence resource="EMBL-CDS" id="AAQ09018"/>
    </conflict>
    <text>Truncated N-terminus.</text>
</comment>
<comment type="sequence caution" evidence="16">
    <conflict type="miscellaneous discrepancy">
        <sequence resource="EMBL-CDS" id="CAH10406"/>
    </conflict>
    <text>Contaminating sequence. Potential poly-A sequence.</text>
</comment>
<gene>
    <name type="primary">CMYA5</name>
    <name type="synonym">C5orf10</name>
    <name type="synonym">DTNBP2</name>
    <name type="synonym">SPRYD2</name>
    <name type="synonym">TRIM76</name>
</gene>
<dbReference type="EMBL" id="AC008482">
    <property type="status" value="NOT_ANNOTATED_CDS"/>
    <property type="molecule type" value="Genomic_DNA"/>
</dbReference>
<dbReference type="EMBL" id="AC109488">
    <property type="status" value="NOT_ANNOTATED_CDS"/>
    <property type="molecule type" value="Genomic_DNA"/>
</dbReference>
<dbReference type="EMBL" id="AC008496">
    <property type="status" value="NOT_ANNOTATED_CDS"/>
    <property type="molecule type" value="Genomic_DNA"/>
</dbReference>
<dbReference type="EMBL" id="AL831966">
    <property type="protein sequence ID" value="CAD38607.1"/>
    <property type="molecule type" value="mRNA"/>
</dbReference>
<dbReference type="EMBL" id="AL831968">
    <property type="protein sequence ID" value="CAD38609.2"/>
    <property type="molecule type" value="mRNA"/>
</dbReference>
<dbReference type="EMBL" id="AL831986">
    <property type="protein sequence ID" value="CAD91143.1"/>
    <property type="molecule type" value="mRNA"/>
</dbReference>
<dbReference type="EMBL" id="AL832347">
    <property type="protein sequence ID" value="CAH10406.1"/>
    <property type="status" value="ALT_SEQ"/>
    <property type="molecule type" value="mRNA"/>
</dbReference>
<dbReference type="EMBL" id="AL832368">
    <property type="protein sequence ID" value="CAD91158.1"/>
    <property type="molecule type" value="mRNA"/>
</dbReference>
<dbReference type="EMBL" id="AL832376">
    <property type="protein sequence ID" value="CAH10402.1"/>
    <property type="molecule type" value="mRNA"/>
</dbReference>
<dbReference type="EMBL" id="AL834252">
    <property type="protein sequence ID" value="CAD38928.2"/>
    <property type="molecule type" value="mRNA"/>
</dbReference>
<dbReference type="EMBL" id="BC020856">
    <property type="protein sequence ID" value="AAH20856.1"/>
    <property type="status" value="ALT_SEQ"/>
    <property type="molecule type" value="mRNA"/>
</dbReference>
<dbReference type="EMBL" id="BC022422">
    <property type="protein sequence ID" value="AAH22422.1"/>
    <property type="status" value="ALT_SEQ"/>
    <property type="molecule type" value="mRNA"/>
</dbReference>
<dbReference type="EMBL" id="BC062664">
    <property type="protein sequence ID" value="AAH62664.1"/>
    <property type="status" value="ALT_SEQ"/>
    <property type="molecule type" value="mRNA"/>
</dbReference>
<dbReference type="EMBL" id="BC063134">
    <property type="protein sequence ID" value="AAH63134.1"/>
    <property type="status" value="ALT_SEQ"/>
    <property type="molecule type" value="mRNA"/>
</dbReference>
<dbReference type="EMBL" id="BC111529">
    <property type="protein sequence ID" value="AAI11530.1"/>
    <property type="status" value="ALT_SEQ"/>
    <property type="molecule type" value="mRNA"/>
</dbReference>
<dbReference type="EMBL" id="BC111530">
    <property type="protein sequence ID" value="AAI11531.1"/>
    <property type="molecule type" value="mRNA"/>
</dbReference>
<dbReference type="EMBL" id="AK092699">
    <property type="status" value="NOT_ANNOTATED_CDS"/>
    <property type="molecule type" value="mRNA"/>
</dbReference>
<dbReference type="EMBL" id="AF177292">
    <property type="protein sequence ID" value="AAD55265.1"/>
    <property type="status" value="ALT_SEQ"/>
    <property type="molecule type" value="mRNA"/>
</dbReference>
<dbReference type="EMBL" id="AF533705">
    <property type="protein sequence ID" value="AAQ09018.1"/>
    <property type="status" value="ALT_INIT"/>
    <property type="molecule type" value="mRNA"/>
</dbReference>
<dbReference type="CCDS" id="CCDS47238.1"/>
<dbReference type="RefSeq" id="NP_705838.3">
    <property type="nucleotide sequence ID" value="NM_153610.4"/>
</dbReference>
<dbReference type="SMR" id="Q8N3K9"/>
<dbReference type="BioGRID" id="128427">
    <property type="interactions" value="36"/>
</dbReference>
<dbReference type="FunCoup" id="Q8N3K9">
    <property type="interactions" value="726"/>
</dbReference>
<dbReference type="IntAct" id="Q8N3K9">
    <property type="interactions" value="14"/>
</dbReference>
<dbReference type="MINT" id="Q8N3K9"/>
<dbReference type="STRING" id="9606.ENSP00000394770"/>
<dbReference type="GlyGen" id="Q8N3K9">
    <property type="glycosylation" value="7 sites, 1 N-linked glycan (1 site), 1 O-linked glycan (3 sites)"/>
</dbReference>
<dbReference type="iPTMnet" id="Q8N3K9"/>
<dbReference type="PhosphoSitePlus" id="Q8N3K9"/>
<dbReference type="BioMuta" id="CMYA5"/>
<dbReference type="DMDM" id="182627649"/>
<dbReference type="jPOST" id="Q8N3K9"/>
<dbReference type="MassIVE" id="Q8N3K9"/>
<dbReference type="PaxDb" id="9606-ENSP00000394770"/>
<dbReference type="PeptideAtlas" id="Q8N3K9"/>
<dbReference type="ProteomicsDB" id="71818"/>
<dbReference type="Antibodypedia" id="24574">
    <property type="antibodies" value="41 antibodies from 19 providers"/>
</dbReference>
<dbReference type="DNASU" id="202333"/>
<dbReference type="Ensembl" id="ENST00000446378.3">
    <property type="protein sequence ID" value="ENSP00000394770.2"/>
    <property type="gene ID" value="ENSG00000164309.15"/>
</dbReference>
<dbReference type="GeneID" id="202333"/>
<dbReference type="KEGG" id="hsa:202333"/>
<dbReference type="MANE-Select" id="ENST00000446378.3">
    <property type="protein sequence ID" value="ENSP00000394770.2"/>
    <property type="RefSeq nucleotide sequence ID" value="NM_153610.5"/>
    <property type="RefSeq protein sequence ID" value="NP_705838.3"/>
</dbReference>
<dbReference type="UCSC" id="uc003kgc.4">
    <property type="organism name" value="human"/>
</dbReference>
<dbReference type="AGR" id="HGNC:14305"/>
<dbReference type="CTD" id="202333"/>
<dbReference type="DisGeNET" id="202333"/>
<dbReference type="GeneCards" id="CMYA5"/>
<dbReference type="HGNC" id="HGNC:14305">
    <property type="gene designation" value="CMYA5"/>
</dbReference>
<dbReference type="HPA" id="ENSG00000164309">
    <property type="expression patterns" value="Group enriched (skeletal muscle, tongue)"/>
</dbReference>
<dbReference type="MIM" id="612193">
    <property type="type" value="gene"/>
</dbReference>
<dbReference type="neXtProt" id="NX_Q8N3K9"/>
<dbReference type="OpenTargets" id="ENSG00000164309"/>
<dbReference type="PharmGKB" id="PA37868"/>
<dbReference type="VEuPathDB" id="HostDB:ENSG00000164309"/>
<dbReference type="eggNOG" id="KOG2177">
    <property type="taxonomic scope" value="Eukaryota"/>
</dbReference>
<dbReference type="GeneTree" id="ENSGT00940000159696"/>
<dbReference type="HOGENOM" id="CLU_000269_0_0_1"/>
<dbReference type="InParanoid" id="Q8N3K9"/>
<dbReference type="OMA" id="KPNLAPN"/>
<dbReference type="OrthoDB" id="9949315at2759"/>
<dbReference type="PAN-GO" id="Q8N3K9">
    <property type="GO annotations" value="1 GO annotation based on evolutionary models"/>
</dbReference>
<dbReference type="PhylomeDB" id="Q8N3K9"/>
<dbReference type="TreeFam" id="TF331281"/>
<dbReference type="PathwayCommons" id="Q8N3K9"/>
<dbReference type="SignaLink" id="Q8N3K9"/>
<dbReference type="BioGRID-ORCS" id="202333">
    <property type="hits" value="21 hits in 1147 CRISPR screens"/>
</dbReference>
<dbReference type="ChiTaRS" id="CMYA5">
    <property type="organism name" value="human"/>
</dbReference>
<dbReference type="GenomeRNAi" id="202333"/>
<dbReference type="Pharos" id="Q8N3K9">
    <property type="development level" value="Tbio"/>
</dbReference>
<dbReference type="PRO" id="PR:Q8N3K9"/>
<dbReference type="Proteomes" id="UP000005640">
    <property type="component" value="Chromosome 5"/>
</dbReference>
<dbReference type="RNAct" id="Q8N3K9">
    <property type="molecule type" value="protein"/>
</dbReference>
<dbReference type="Bgee" id="ENSG00000164309">
    <property type="expression patterns" value="Expressed in tibialis anterior and 160 other cell types or tissues"/>
</dbReference>
<dbReference type="GO" id="GO:0005737">
    <property type="term" value="C:cytoplasm"/>
    <property type="evidence" value="ECO:0000318"/>
    <property type="project" value="GO_Central"/>
</dbReference>
<dbReference type="GO" id="GO:0031430">
    <property type="term" value="C:M band"/>
    <property type="evidence" value="ECO:0007669"/>
    <property type="project" value="UniProtKB-SubCell"/>
</dbReference>
<dbReference type="GO" id="GO:0005634">
    <property type="term" value="C:nucleus"/>
    <property type="evidence" value="ECO:0000250"/>
    <property type="project" value="UniProtKB"/>
</dbReference>
<dbReference type="GO" id="GO:0048471">
    <property type="term" value="C:perinuclear region of cytoplasm"/>
    <property type="evidence" value="ECO:0000250"/>
    <property type="project" value="UniProtKB"/>
</dbReference>
<dbReference type="GO" id="GO:0016529">
    <property type="term" value="C:sarcoplasmic reticulum"/>
    <property type="evidence" value="ECO:0000250"/>
    <property type="project" value="UniProtKB"/>
</dbReference>
<dbReference type="CDD" id="cd00063">
    <property type="entry name" value="FN3"/>
    <property type="match status" value="2"/>
</dbReference>
<dbReference type="CDD" id="cd12898">
    <property type="entry name" value="SPRY_PRY_TRIM76"/>
    <property type="match status" value="1"/>
</dbReference>
<dbReference type="FunFam" id="2.60.40.10:FF:000985">
    <property type="entry name" value="Cardiomyopathy associated 5"/>
    <property type="match status" value="1"/>
</dbReference>
<dbReference type="FunFam" id="3.30.160.60:FF:002044">
    <property type="entry name" value="Cardiomyopathy associated 5"/>
    <property type="match status" value="1"/>
</dbReference>
<dbReference type="FunFam" id="2.60.120.920:FF:000038">
    <property type="entry name" value="cardiomyopathy-associated protein 5"/>
    <property type="match status" value="1"/>
</dbReference>
<dbReference type="FunFam" id="2.60.40.10:FF:001611">
    <property type="entry name" value="cardiomyopathy-associated protein 5"/>
    <property type="match status" value="1"/>
</dbReference>
<dbReference type="Gene3D" id="2.60.120.920">
    <property type="match status" value="1"/>
</dbReference>
<dbReference type="Gene3D" id="3.30.160.60">
    <property type="entry name" value="Classic Zinc Finger"/>
    <property type="match status" value="1"/>
</dbReference>
<dbReference type="Gene3D" id="2.60.40.10">
    <property type="entry name" value="Immunoglobulins"/>
    <property type="match status" value="2"/>
</dbReference>
<dbReference type="InterPro" id="IPR001870">
    <property type="entry name" value="B30.2/SPRY"/>
</dbReference>
<dbReference type="InterPro" id="IPR043136">
    <property type="entry name" value="B30.2/SPRY_sf"/>
</dbReference>
<dbReference type="InterPro" id="IPR013320">
    <property type="entry name" value="ConA-like_dom_sf"/>
</dbReference>
<dbReference type="InterPro" id="IPR050617">
    <property type="entry name" value="E3_ligase_FN3/SPRY"/>
</dbReference>
<dbReference type="InterPro" id="IPR003961">
    <property type="entry name" value="FN3_dom"/>
</dbReference>
<dbReference type="InterPro" id="IPR036116">
    <property type="entry name" value="FN3_sf"/>
</dbReference>
<dbReference type="InterPro" id="IPR013783">
    <property type="entry name" value="Ig-like_fold"/>
</dbReference>
<dbReference type="InterPro" id="IPR003877">
    <property type="entry name" value="SPRY_dom"/>
</dbReference>
<dbReference type="PANTHER" id="PTHR24099:SF7">
    <property type="entry name" value="CARDIOMYOPATHY-ASSOCIATED PROTEIN 5"/>
    <property type="match status" value="1"/>
</dbReference>
<dbReference type="PANTHER" id="PTHR24099">
    <property type="entry name" value="E3 UBIQUITIN-PROTEIN LIGASE TRIM36-RELATED"/>
    <property type="match status" value="1"/>
</dbReference>
<dbReference type="Pfam" id="PF00622">
    <property type="entry name" value="SPRY"/>
    <property type="match status" value="1"/>
</dbReference>
<dbReference type="SMART" id="SM00060">
    <property type="entry name" value="FN3"/>
    <property type="match status" value="2"/>
</dbReference>
<dbReference type="SUPFAM" id="SSF57845">
    <property type="entry name" value="B-box zinc-binding domain"/>
    <property type="match status" value="1"/>
</dbReference>
<dbReference type="SUPFAM" id="SSF49899">
    <property type="entry name" value="Concanavalin A-like lectins/glucanases"/>
    <property type="match status" value="1"/>
</dbReference>
<dbReference type="SUPFAM" id="SSF49265">
    <property type="entry name" value="Fibronectin type III"/>
    <property type="match status" value="1"/>
</dbReference>
<dbReference type="PROSITE" id="PS50188">
    <property type="entry name" value="B302_SPRY"/>
    <property type="match status" value="1"/>
</dbReference>
<dbReference type="PROSITE" id="PS50853">
    <property type="entry name" value="FN3"/>
    <property type="match status" value="2"/>
</dbReference>
<sequence>MASRDSNHAGESFLGSDGDEEATRELETEEESEGEEDETAAESEEEPDSRLSDQDEEGKIKQEYIISDPSFSMVTVQREDSGITWETNSSRSSTPWASEESQTSGVCSREGSTVNSPPGNVSFIVDEVKKVRKRTHKSKHGSPSLRRKGNRKRNSFESQDVPTNKKGSPLTSASQVLTTEKEKSYTGIYDKARKKKTTSNTPPITGAIYKEHKPLVLRPVYIGTVQYKIKMFNSVKEELIPLQFYGTLPKGYVIKEIHYRKGKDASISLEPDLDNSGSNTVSKTRKLVAQSIEDKVKEVFPPWRGALSKGSESLTLMFSHEDQKKIYADSPLNATSALEHTVPSYSSSGRAEQGIQLRHSQSVPQQPEDEAKPHEVEPPSVTPDTPATMFLRTTKEECELASPGTAASENDSSVSPSFANEVKKEDVYSAHHSISLEAASPGLAASTQDGLDPDQEQPDLTSIERAEPVSAKLTPTHPSVKGEKEENMLEPSISLSEPLMLEEPEKEEIETSLPIAITPEPEDSNLVEEEIVELDYPESPLVSEKPFPPHMSPEVEHKEEELILPLLAASSPEHVALSEEEREEIASVSTGSAFVSEYSVPQDLNHELQEQEGEPVPPSNVEAIAEHAVLSEEENEEFEAYSPAAAPTSESSLSPSTTEKTSENQSPLFSTVTPEYMVLSGDEASESGCYTPDSTSASEYSVPSLATKESLKKTIDRKSPLILKGVSEYMIPSEEKEDTGSFTPAVAPASEPSLSPSTTEKTSECQSPLPSTATSEHVVPSEGEDLGSERFTPDSKLISKYAAPLNATQESQKKIINEASQFKPKGISEHTVLSVDGKEVIGPSSPDLVVASEHSFPPHTTEMTSECQAPPLSATPSEYVVLSDEEAVELERYTPSSTSASEFSVPPYATPEAQEEEIVHRSLNLKGASSPMNLSEEDQEDIGPFSPDSAFVSEFSFPPYATQEAEKREFECDSPICLTSPSEHTILSDEDTEEAELFSPDSASQVSIPPFRISETEKNELEPDSLLTAVSASGYSCFSEADEEDIGSTAATPVSEQFSSSQKQKAETFPLMSPLEDLSLPPSTDKSEKAEIKPEIPTTSTSVSEYLILAQKQKTQAYLEPESEDLIPSHLTSEVEKGEREASSSVAAIPAALPAQSSIVKEETKPASPHSVLPDSVPAIKKEQEPTAALTLKAADEQMALSKVRKEEIVPDSQEATAHVSQDQKMEPQPPNVPESEMKYSVLPDMVDEPKKGVKPKLVLNVTSELEQRKLSKNEPEVIKPYSPLKETSLSGPEALSAVKMEMKHDSKITTTPIVLHSASSGVEKQVEHGPPALAFSALSEEIKKEIEPSSSTTTASVTKLDSNLTRAVKEEIPTDSSLITPVDRPVLTKVGKGELGSGLPPLVTSADEHSVLAEEDKVAIKGASPIETSSKHLAWSEAEKEIKFDSLPSVSSIAEHSVLSEVEAKEVKAGLPVIKTSSSQHSDKSEEARVEDKQDLLFSTVCDSERLVSSQKKSLMSTSEVLEPEHELPLSLWGEIKKKETELPSSQNVSPASKHIIPKGKDEETASSSPELENLASGLAPTLLLLSDDKNKPAVEVSSTAQGDFPSEKQDVALAELSLEPEKKDKPHQPLELPNAGSEFSSDLGRQSGSIGTKQAKSPITETEDSVLEKGPAELRSREGKEENRELCASSTMPAISELSSLLREESQNEEIKPFSPKIISLESKEPPASVAEGGNPEEFQPFTFSLKGLSEEVSHPADFKKGGNQEIGPLPPTGNLKAQVMGDILDKLSEETGHPNSSQVLQSITEPSKIAPSDLLVEQKKTEKALHSDQTVKLPDVSTSSEDKQDLGIKQFSLMRENLPLEQSKSFMTTKPADVKETKMEEFFISPKDENWMLGKPENVASQHEQRIAGSVQLDSSSSNELRPGQLKAAVSSKDHTCEVRKQVLPHSAEESHLSSQEAVSALDTSSGNTETLSSKSYSSEEVKLAEEPKSLVLAGNVERNIAEGKEIHSLMESESLLLEKANTELSWPSKEDSQEKIKLPPERFFQKPVSGLSVEQVKSETISSSVKTAHFPAEGVEPALGNEKEAHRSTPPFPEEKPLEESKMVQSKVIDDADEGKKPSPEVKIPTQRKPISSIHAREPQSPESPEVTQNPPTQPKVAKPDLPEEKGKKGISSFKSWMSSLFFGSSTPDNKVAEQEDLETQPSPSVEKAVTVIDPEGTIPTNFNVAEKPADHSLSEVKLKTADEPRGTLVKSGDGQNVKEKSMILSNVEDLQQPKFISEVSREDYGKKEISGDSEEMNINSVVTSADGENLEIQSYSLIGEKLVMEEAKTIVPPHVTDSKRVQKPAIAPPSKWNISIFKEEPRSDQKQKSLLSFDVVDKVPQQPKSASSNFASKNITKESEKPESIILPVEESKGSLIDFSEDRLKKEMQNPTSLKISEEETKLRSVSPTEKKDNLENRSYTLAEKKVLAEKQNSVAPLELRDSNEIGKTQITLGSRSTELKESKADAMPQHFYQNEDYNERPKIIVGSEKEKGEEKENQVYVLSEGKKQQEHQPYSVNVAESMSRESDISLGHSLGETQSFSLVKATSVTEKSEAMLAEAHPEIREAKAVGTQPHPLEESKVLVEKTKTFLPVALSCRDEIENHSLSQEGNLVLEKSSRDMPDHSEEKEQFRESELSKGGSVDITKETVKQGFQEKAVGTQPRPLEESKVLVEKTKTFLPVVLSCHDEIENHSLSQEGNLVLEKSSRDMPDHSEEKEQFKESELWKGGSVDITKESMKEGFPSKESERTLARPFDETKSSETPPYLLSPVKPQTLASGASPEINAVKKKEMPRSELTPERHTVHTIQTSKDDTSDVPKQSVLVSKHHLEAAEDTRVKEPLSSAKSNYAQFISNTSASNADKMVSNKEMPKEPEDTYAKGEDFTVTSKPAGLSEDQKTAFSIISEGCEILNIHAPAFISSIDQEESEQMQDKLEYLEEKASFKTIPLPDDSETVACHKTLKSRLEDEKVTPLKENKQKETHKTKEEISTDSETDLSFIQPTIPSEEDYFEKYTLIDYNISPDPEKQKAPQKLNVEEKLSKEVTEETISFPVSSVESALEHEYDLVKLDESFYGPEKGHNILSHPETQSQNSADRNVSKDTKRDVDSKSPGMPLFEAEEGVLSRTQIFPTTIKVIDPEFLEEPPALAFLYKDLYEEAVGEKKKEEETASEGDSVNSEASFPSRNSDTDDGTGIYFEKYILKDDILHDTSLTQKDQGQGLEEKRVGKDDSYQPIAAEGEIWGKFGTICREKSLEEQKGVYGEGESVDHVETVGNVAMQKKAPITEDVRVATQKISYAVPFEDTHHVLERADEAGSHGNEVGNASPEVNLNVPVQVSFPEEEFASGATHVQETSLEEPKILVPPEPSEERLRNSPVQDEYEFTESLHNEVVPQDILSEELSSESTPEDVLSQGKESFEHISENEFASEAEQSTPAEQKELGSERKEEDQLSSEVVTEKAQKELKKSQIDTYCYTCKCPISATDKVFGTHKDHEVSTLDTAISAVKVQLAEFLENLQEKSLRIEAFVSEIESFFNTIEENCSKNEKRLEEQNEEMMKKVLAQYDEKAQSFEEVKKKKMEFLHEQMVHFLQSMDTAKDTLETIVREAEELDEAVFLTSFEEINERLLSAMESTASLEKMPAAFSLFEHYDDSSARSDQMLKQVAVPQPPRLEPQEPNSATSTTIAVYWSMNKEDVIDSFQVYCMEEPQDDQEVNELVEEYRLTVKESYCIFEDLEPDRCYQVWVMAVNFTGCSLPSERAIFRTAPSTPVIRAEDCTVCWNTATIRWRPTTPEATETYTLEYCRQHSPEGEGLRSFSGIKGLQLKVNLQPNDNYFFYVRAINAFGTSEQSEAALISTRGTRFLLLRETAHPALHISSSGTVISFGERRRLTEIPSVLGEELPSCGQHYWETTVTDCPAYRLGICSSSAVQAGALGQGETSWYMHCSEPQRYTFFYSGIVSDVHVTERPARVGILLDYNNQRLIFINAESEQLLFIIRHRFNEGVHPAFALEKPGKCTLHLGIEPPDSVRHK</sequence>
<protein>
    <recommendedName>
        <fullName>Cardiomyopathy-associated protein 5</fullName>
    </recommendedName>
    <alternativeName>
        <fullName>Dystrobrevin-binding protein 2</fullName>
    </alternativeName>
    <alternativeName>
        <fullName>Genethonin-3</fullName>
    </alternativeName>
    <alternativeName>
        <fullName evidence="15">Myospryn</fullName>
    </alternativeName>
    <alternativeName>
        <fullName>SPRY domain-containing protein 2</fullName>
    </alternativeName>
    <alternativeName>
        <fullName>Tripartite motif-containing protein 76</fullName>
    </alternativeName>
</protein>
<proteinExistence type="evidence at protein level"/>
<evidence type="ECO:0000250" key="1"/>
<evidence type="ECO:0000250" key="2">
    <source>
        <dbReference type="UniProtKB" id="A0A286XF80"/>
    </source>
</evidence>
<evidence type="ECO:0000250" key="3">
    <source>
        <dbReference type="UniProtKB" id="Q70KF4"/>
    </source>
</evidence>
<evidence type="ECO:0000255" key="4"/>
<evidence type="ECO:0000255" key="5">
    <source>
        <dbReference type="PROSITE-ProRule" id="PRU00316"/>
    </source>
</evidence>
<evidence type="ECO:0000255" key="6">
    <source>
        <dbReference type="PROSITE-ProRule" id="PRU00548"/>
    </source>
</evidence>
<evidence type="ECO:0000256" key="7">
    <source>
        <dbReference type="SAM" id="MobiDB-lite"/>
    </source>
</evidence>
<evidence type="ECO:0000269" key="8">
    <source>
    </source>
</evidence>
<evidence type="ECO:0000269" key="9">
    <source>
    </source>
</evidence>
<evidence type="ECO:0000269" key="10">
    <source>
    </source>
</evidence>
<evidence type="ECO:0000269" key="11">
    <source>
    </source>
</evidence>
<evidence type="ECO:0000269" key="12">
    <source>
    </source>
</evidence>
<evidence type="ECO:0000269" key="13">
    <source>
    </source>
</evidence>
<evidence type="ECO:0000269" key="14">
    <source ref="6"/>
</evidence>
<evidence type="ECO:0000303" key="15">
    <source>
    </source>
</evidence>
<evidence type="ECO:0000305" key="16"/>
<keyword id="KW-0175">Coiled coil</keyword>
<keyword id="KW-0963">Cytoplasm</keyword>
<keyword id="KW-0539">Nucleus</keyword>
<keyword id="KW-0597">Phosphoprotein</keyword>
<keyword id="KW-1267">Proteomics identification</keyword>
<keyword id="KW-1185">Reference proteome</keyword>
<keyword id="KW-0677">Repeat</keyword>
<keyword id="KW-0703">Sarcoplasmic reticulum</keyword>
<reference key="1">
    <citation type="journal article" date="2004" name="Nature">
        <title>The DNA sequence and comparative analysis of human chromosome 5.</title>
        <authorList>
            <person name="Schmutz J."/>
            <person name="Martin J."/>
            <person name="Terry A."/>
            <person name="Couronne O."/>
            <person name="Grimwood J."/>
            <person name="Lowry S."/>
            <person name="Gordon L.A."/>
            <person name="Scott D."/>
            <person name="Xie G."/>
            <person name="Huang W."/>
            <person name="Hellsten U."/>
            <person name="Tran-Gyamfi M."/>
            <person name="She X."/>
            <person name="Prabhakar S."/>
            <person name="Aerts A."/>
            <person name="Altherr M."/>
            <person name="Bajorek E."/>
            <person name="Black S."/>
            <person name="Branscomb E."/>
            <person name="Caoile C."/>
            <person name="Challacombe J.F."/>
            <person name="Chan Y.M."/>
            <person name="Denys M."/>
            <person name="Detter J.C."/>
            <person name="Escobar J."/>
            <person name="Flowers D."/>
            <person name="Fotopulos D."/>
            <person name="Glavina T."/>
            <person name="Gomez M."/>
            <person name="Gonzales E."/>
            <person name="Goodstein D."/>
            <person name="Grigoriev I."/>
            <person name="Groza M."/>
            <person name="Hammon N."/>
            <person name="Hawkins T."/>
            <person name="Haydu L."/>
            <person name="Israni S."/>
            <person name="Jett J."/>
            <person name="Kadner K."/>
            <person name="Kimball H."/>
            <person name="Kobayashi A."/>
            <person name="Lopez F."/>
            <person name="Lou Y."/>
            <person name="Martinez D."/>
            <person name="Medina C."/>
            <person name="Morgan J."/>
            <person name="Nandkeshwar R."/>
            <person name="Noonan J.P."/>
            <person name="Pitluck S."/>
            <person name="Pollard M."/>
            <person name="Predki P."/>
            <person name="Priest J."/>
            <person name="Ramirez L."/>
            <person name="Retterer J."/>
            <person name="Rodriguez A."/>
            <person name="Rogers S."/>
            <person name="Salamov A."/>
            <person name="Salazar A."/>
            <person name="Thayer N."/>
            <person name="Tice H."/>
            <person name="Tsai M."/>
            <person name="Ustaszewska A."/>
            <person name="Vo N."/>
            <person name="Wheeler J."/>
            <person name="Wu K."/>
            <person name="Yang J."/>
            <person name="Dickson M."/>
            <person name="Cheng J.-F."/>
            <person name="Eichler E.E."/>
            <person name="Olsen A."/>
            <person name="Pennacchio L.A."/>
            <person name="Rokhsar D.S."/>
            <person name="Richardson P."/>
            <person name="Lucas S.M."/>
            <person name="Myers R.M."/>
            <person name="Rubin E.M."/>
        </authorList>
    </citation>
    <scope>NUCLEOTIDE SEQUENCE [LARGE SCALE GENOMIC DNA]</scope>
</reference>
<reference key="2">
    <citation type="journal article" date="2007" name="BMC Genomics">
        <title>The full-ORF clone resource of the German cDNA consortium.</title>
        <authorList>
            <person name="Bechtel S."/>
            <person name="Rosenfelder H."/>
            <person name="Duda A."/>
            <person name="Schmidt C.P."/>
            <person name="Ernst U."/>
            <person name="Wellenreuther R."/>
            <person name="Mehrle A."/>
            <person name="Schuster C."/>
            <person name="Bahr A."/>
            <person name="Bloecker H."/>
            <person name="Heubner D."/>
            <person name="Hoerlein A."/>
            <person name="Michel G."/>
            <person name="Wedler H."/>
            <person name="Koehrer K."/>
            <person name="Ottenwaelder B."/>
            <person name="Poustka A."/>
            <person name="Wiemann S."/>
            <person name="Schupp I."/>
        </authorList>
    </citation>
    <scope>NUCLEOTIDE SEQUENCE [LARGE SCALE MRNA] OF 1-1682 AND 2600-4069</scope>
    <scope>VARIANTS GLY-190; VAL-1295; GLU-3583 AND LEU-4063</scope>
    <source>
        <tissue>Skeletal muscle</tissue>
    </source>
</reference>
<reference key="3">
    <citation type="journal article" date="2004" name="Genome Res.">
        <title>The status, quality, and expansion of the NIH full-length cDNA project: the Mammalian Gene Collection (MGC).</title>
        <authorList>
            <consortium name="The MGC Project Team"/>
        </authorList>
    </citation>
    <scope>NUCLEOTIDE SEQUENCE [LARGE SCALE MRNA] OF 1-283; 1067-1340; 1604-2691 AND 2754-4069</scope>
    <scope>VARIANTS GLY-1920; LEU-2262; GLN-3358; GLU-3583 AND GLN-3927</scope>
    <source>
        <tissue>Liver</tissue>
        <tissue>Skeletal muscle</tissue>
    </source>
</reference>
<reference key="4">
    <citation type="journal article" date="2004" name="Nat. Genet.">
        <title>Complete sequencing and characterization of 21,243 full-length human cDNAs.</title>
        <authorList>
            <person name="Ota T."/>
            <person name="Suzuki Y."/>
            <person name="Nishikawa T."/>
            <person name="Otsuki T."/>
            <person name="Sugiyama T."/>
            <person name="Irie R."/>
            <person name="Wakamatsu A."/>
            <person name="Hayashi K."/>
            <person name="Sato H."/>
            <person name="Nagai K."/>
            <person name="Kimura K."/>
            <person name="Makita H."/>
            <person name="Sekine M."/>
            <person name="Obayashi M."/>
            <person name="Nishi T."/>
            <person name="Shibahara T."/>
            <person name="Tanaka T."/>
            <person name="Ishii S."/>
            <person name="Yamamoto J."/>
            <person name="Saito K."/>
            <person name="Kawai Y."/>
            <person name="Isono Y."/>
            <person name="Nakamura Y."/>
            <person name="Nagahari K."/>
            <person name="Murakami K."/>
            <person name="Yasuda T."/>
            <person name="Iwayanagi T."/>
            <person name="Wagatsuma M."/>
            <person name="Shiratori A."/>
            <person name="Sudo H."/>
            <person name="Hosoiri T."/>
            <person name="Kaku Y."/>
            <person name="Kodaira H."/>
            <person name="Kondo H."/>
            <person name="Sugawara M."/>
            <person name="Takahashi M."/>
            <person name="Kanda K."/>
            <person name="Yokoi T."/>
            <person name="Furuya T."/>
            <person name="Kikkawa E."/>
            <person name="Omura Y."/>
            <person name="Abe K."/>
            <person name="Kamihara K."/>
            <person name="Katsuta N."/>
            <person name="Sato K."/>
            <person name="Tanikawa M."/>
            <person name="Yamazaki M."/>
            <person name="Ninomiya K."/>
            <person name="Ishibashi T."/>
            <person name="Yamashita H."/>
            <person name="Murakawa K."/>
            <person name="Fujimori K."/>
            <person name="Tanai H."/>
            <person name="Kimata M."/>
            <person name="Watanabe M."/>
            <person name="Hiraoka S."/>
            <person name="Chiba Y."/>
            <person name="Ishida S."/>
            <person name="Ono Y."/>
            <person name="Takiguchi S."/>
            <person name="Watanabe S."/>
            <person name="Yosida M."/>
            <person name="Hotuta T."/>
            <person name="Kusano J."/>
            <person name="Kanehori K."/>
            <person name="Takahashi-Fujii A."/>
            <person name="Hara H."/>
            <person name="Tanase T.-O."/>
            <person name="Nomura Y."/>
            <person name="Togiya S."/>
            <person name="Komai F."/>
            <person name="Hara R."/>
            <person name="Takeuchi K."/>
            <person name="Arita M."/>
            <person name="Imose N."/>
            <person name="Musashino K."/>
            <person name="Yuuki H."/>
            <person name="Oshima A."/>
            <person name="Sasaki N."/>
            <person name="Aotsuka S."/>
            <person name="Yoshikawa Y."/>
            <person name="Matsunawa H."/>
            <person name="Ichihara T."/>
            <person name="Shiohata N."/>
            <person name="Sano S."/>
            <person name="Moriya S."/>
            <person name="Momiyama H."/>
            <person name="Satoh N."/>
            <person name="Takami S."/>
            <person name="Terashima Y."/>
            <person name="Suzuki O."/>
            <person name="Nakagawa S."/>
            <person name="Senoh A."/>
            <person name="Mizoguchi H."/>
            <person name="Goto Y."/>
            <person name="Shimizu F."/>
            <person name="Wakebe H."/>
            <person name="Hishigaki H."/>
            <person name="Watanabe T."/>
            <person name="Sugiyama A."/>
            <person name="Takemoto M."/>
            <person name="Kawakami B."/>
            <person name="Yamazaki M."/>
            <person name="Watanabe K."/>
            <person name="Kumagai A."/>
            <person name="Itakura S."/>
            <person name="Fukuzumi Y."/>
            <person name="Fujimori Y."/>
            <person name="Komiyama M."/>
            <person name="Tashiro H."/>
            <person name="Tanigami A."/>
            <person name="Fujiwara T."/>
            <person name="Ono T."/>
            <person name="Yamada K."/>
            <person name="Fujii Y."/>
            <person name="Ozaki K."/>
            <person name="Hirao M."/>
            <person name="Ohmori Y."/>
            <person name="Kawabata A."/>
            <person name="Hikiji T."/>
            <person name="Kobatake N."/>
            <person name="Inagaki H."/>
            <person name="Ikema Y."/>
            <person name="Okamoto S."/>
            <person name="Okitani R."/>
            <person name="Kawakami T."/>
            <person name="Noguchi S."/>
            <person name="Itoh T."/>
            <person name="Shigeta K."/>
            <person name="Senba T."/>
            <person name="Matsumura K."/>
            <person name="Nakajima Y."/>
            <person name="Mizuno T."/>
            <person name="Morinaga M."/>
            <person name="Sasaki M."/>
            <person name="Togashi T."/>
            <person name="Oyama M."/>
            <person name="Hata H."/>
            <person name="Watanabe M."/>
            <person name="Komatsu T."/>
            <person name="Mizushima-Sugano J."/>
            <person name="Satoh T."/>
            <person name="Shirai Y."/>
            <person name="Takahashi Y."/>
            <person name="Nakagawa K."/>
            <person name="Okumura K."/>
            <person name="Nagase T."/>
            <person name="Nomura N."/>
            <person name="Kikuchi H."/>
            <person name="Masuho Y."/>
            <person name="Yamashita R."/>
            <person name="Nakai K."/>
            <person name="Yada T."/>
            <person name="Nakamura Y."/>
            <person name="Ohara O."/>
            <person name="Isogai T."/>
            <person name="Sugano S."/>
        </authorList>
    </citation>
    <scope>NUCLEOTIDE SEQUENCE [LARGE SCALE MRNA] OF 1067-1340</scope>
    <source>
        <tissue>Skeletal muscle</tissue>
    </source>
</reference>
<reference key="5">
    <citation type="journal article" date="2001" name="Neuromuscul. Disord.">
        <title>Identification of altered gene expression in skeletal muscles from Duchenne muscular dystrophy patients.</title>
        <authorList>
            <person name="Tkatchenko A.V."/>
            <person name="Pietu G."/>
            <person name="Cros N."/>
            <person name="Gannoun-Zaki L."/>
            <person name="Auffray C."/>
            <person name="Leger J.J."/>
            <person name="Dechesne C.A."/>
        </authorList>
    </citation>
    <scope>NUCLEOTIDE SEQUENCE [MRNA] OF 1736-2539</scope>
    <scope>INDUCTION</scope>
    <scope>TISSUE SPECIFICITY</scope>
</reference>
<reference key="6">
    <citation type="submission" date="2002-07" db="EMBL/GenBank/DDBJ databases">
        <authorList>
            <person name="Ding P."/>
            <person name="Han W."/>
            <person name="Wang L."/>
            <person name="Wang Y."/>
            <person name="Qiu X."/>
            <person name="Xu M."/>
            <person name="Ma D."/>
        </authorList>
    </citation>
    <scope>NUCLEOTIDE SEQUENCE [MRNA] OF 3113-4069</scope>
    <scope>VARIANT GLN-3927</scope>
    <source>
        <tissue>Mammary gland</tissue>
    </source>
</reference>
<reference key="7">
    <citation type="journal article" date="2004" name="J. Biol. Chem.">
        <title>Myospryn is a novel binding partner for dysbindin in muscle.</title>
        <authorList>
            <person name="Benson M.A."/>
            <person name="Tinsley C.L."/>
            <person name="Blake D.J."/>
        </authorList>
    </citation>
    <scope>INDUCTION</scope>
</reference>
<reference key="8">
    <citation type="journal article" date="2007" name="J. Biol. Chem.">
        <title>Proper perinuclear localization of the TRIM-like protein myospryn requires its binding partner desmin.</title>
        <authorList>
            <person name="Kouloumenta A."/>
            <person name="Mavroidis M."/>
            <person name="Capetanaki Y."/>
        </authorList>
    </citation>
    <scope>INTERACTION WITH DES</scope>
</reference>
<reference key="9">
    <citation type="journal article" date="2010" name="J. Biol. Chem.">
        <title>Interactions with M-band titin and calpain 3 link myospryn (CMYA5) to tibial and limb-girdle muscular dystrophies.</title>
        <authorList>
            <person name="Sarparanta J."/>
            <person name="Blandin G."/>
            <person name="Charton K."/>
            <person name="Vihola A."/>
            <person name="Marchand S."/>
            <person name="Milic A."/>
            <person name="Hackman P."/>
            <person name="Ehler E."/>
            <person name="Richard I."/>
            <person name="Udd B."/>
        </authorList>
    </citation>
    <scope>INTERACTION WITH CAPN3 AND TTN</scope>
    <scope>SUBCELLULAR LOCATION</scope>
</reference>
<accession>Q8N3K9</accession>
<accession>A0PJB7</accession>
<accession>Q05CT4</accession>
<accession>Q2NKX1</accession>
<accession>Q2T9G9</accession>
<accession>Q69YQ8</accession>
<accession>Q69YQ9</accession>
<accession>Q6P517</accession>
<accession>Q6P5U3</accession>
<accession>Q7Z4I1</accession>
<accession>Q86T34</accession>
<accession>Q86T49</accession>
<accession>Q8N3S4</accession>
<accession>Q8N3S7</accession>
<accession>Q8NAG8</accession>
<accession>Q9UK88</accession>
<name>CMYA5_HUMAN</name>
<feature type="chain" id="PRO_0000328722" description="Cardiomyopathy-associated protein 5">
    <location>
        <begin position="1"/>
        <end position="4069"/>
    </location>
</feature>
<feature type="domain" description="Fibronectin type-III 1" evidence="5">
    <location>
        <begin position="3704"/>
        <end position="3805"/>
    </location>
</feature>
<feature type="domain" description="Fibronectin type-III 2" evidence="5">
    <location>
        <begin position="3806"/>
        <end position="3898"/>
    </location>
</feature>
<feature type="domain" description="B30.2/SPRY" evidence="6">
    <location>
        <begin position="3880"/>
        <end position="4065"/>
    </location>
</feature>
<feature type="region of interest" description="Disordered" evidence="7">
    <location>
        <begin position="1"/>
        <end position="177"/>
    </location>
</feature>
<feature type="region of interest" description="Disordered" evidence="7">
    <location>
        <begin position="341"/>
        <end position="387"/>
    </location>
</feature>
<feature type="region of interest" description="Disordered" evidence="7">
    <location>
        <begin position="442"/>
        <end position="525"/>
    </location>
</feature>
<feature type="region of interest" description="Disordered" evidence="7">
    <location>
        <begin position="538"/>
        <end position="558"/>
    </location>
</feature>
<feature type="region of interest" description="Disordered" evidence="7">
    <location>
        <begin position="597"/>
        <end position="705"/>
    </location>
</feature>
<feature type="region of interest" description="Disordered" evidence="7">
    <location>
        <begin position="732"/>
        <end position="793"/>
    </location>
</feature>
<feature type="region of interest" description="Disordered" evidence="7">
    <location>
        <begin position="844"/>
        <end position="872"/>
    </location>
</feature>
<feature type="region of interest" description="Disordered" evidence="7">
    <location>
        <begin position="890"/>
        <end position="948"/>
    </location>
</feature>
<feature type="region of interest" description="Disordered" evidence="7">
    <location>
        <begin position="979"/>
        <end position="1009"/>
    </location>
</feature>
<feature type="region of interest" description="Disordered" evidence="7">
    <location>
        <begin position="1041"/>
        <end position="1097"/>
    </location>
</feature>
<feature type="region of interest" description="Disordered" evidence="7">
    <location>
        <begin position="1160"/>
        <end position="1179"/>
    </location>
</feature>
<feature type="region of interest" description="Disordered" evidence="7">
    <location>
        <begin position="1205"/>
        <end position="1237"/>
    </location>
</feature>
<feature type="region of interest" description="Disordered" evidence="7">
    <location>
        <begin position="1540"/>
        <end position="1575"/>
    </location>
</feature>
<feature type="region of interest" description="Disordered" evidence="7">
    <location>
        <begin position="1594"/>
        <end position="1742"/>
    </location>
</feature>
<feature type="region of interest" description="Disordered" evidence="7">
    <location>
        <begin position="1757"/>
        <end position="1809"/>
    </location>
</feature>
<feature type="region of interest" description="Disordered" evidence="7">
    <location>
        <begin position="1892"/>
        <end position="1988"/>
    </location>
</feature>
<feature type="region of interest" description="Disordered" evidence="7">
    <location>
        <begin position="2064"/>
        <end position="2175"/>
    </location>
</feature>
<feature type="region of interest" description="Disordered" evidence="7">
    <location>
        <begin position="2187"/>
        <end position="2259"/>
    </location>
</feature>
<feature type="region of interest" description="Disordered" evidence="7">
    <location>
        <begin position="2385"/>
        <end position="2412"/>
    </location>
</feature>
<feature type="region of interest" description="Disordered" evidence="7">
    <location>
        <begin position="2425"/>
        <end position="2463"/>
    </location>
</feature>
<feature type="region of interest" description="Disordered" evidence="7">
    <location>
        <begin position="2494"/>
        <end position="2527"/>
    </location>
</feature>
<feature type="region of interest" description="Disordered" evidence="7">
    <location>
        <begin position="2653"/>
        <end position="2706"/>
    </location>
</feature>
<feature type="region of interest" description="Disordered" evidence="7">
    <location>
        <begin position="2750"/>
        <end position="2862"/>
    </location>
</feature>
<feature type="region of interest" description="Disordered" evidence="7">
    <location>
        <begin position="3015"/>
        <end position="3037"/>
    </location>
</feature>
<feature type="region of interest" description="Required for RYR2 clustering" evidence="3">
    <location>
        <begin position="3052"/>
        <end position="3365"/>
    </location>
</feature>
<feature type="region of interest" description="Disordered" evidence="7">
    <location>
        <begin position="3119"/>
        <end position="3156"/>
    </location>
</feature>
<feature type="region of interest" description="Disordered" evidence="7">
    <location>
        <begin position="3204"/>
        <end position="3231"/>
    </location>
</feature>
<feature type="region of interest" description="Disordered" evidence="7">
    <location>
        <begin position="3386"/>
        <end position="3421"/>
    </location>
</feature>
<feature type="region of interest" description="Disordered" evidence="7">
    <location>
        <begin position="3465"/>
        <end position="3495"/>
    </location>
</feature>
<feature type="region of interest" description="Amphipathic helix H1">
    <location>
        <begin position="3517"/>
        <end position="3544"/>
    </location>
</feature>
<feature type="region of interest" description="B-box coiled-coil; BBC">
    <location>
        <begin position="3545"/>
        <end position="3672"/>
    </location>
</feature>
<feature type="region of interest" description="Amphipathic helix H2">
    <location>
        <begin position="3631"/>
        <end position="3648"/>
    </location>
</feature>
<feature type="region of interest" description="Amphipathic helix H3">
    <location>
        <begin position="3751"/>
        <end position="3767"/>
    </location>
</feature>
<feature type="coiled-coil region" evidence="4">
    <location>
        <begin position="2964"/>
        <end position="2988"/>
    </location>
</feature>
<feature type="coiled-coil region" evidence="4">
    <location>
        <begin position="3544"/>
        <end position="3653"/>
    </location>
</feature>
<feature type="compositionally biased region" description="Acidic residues" evidence="7">
    <location>
        <begin position="27"/>
        <end position="47"/>
    </location>
</feature>
<feature type="compositionally biased region" description="Basic and acidic residues" evidence="7">
    <location>
        <begin position="48"/>
        <end position="62"/>
    </location>
</feature>
<feature type="compositionally biased region" description="Polar residues" evidence="7">
    <location>
        <begin position="84"/>
        <end position="119"/>
    </location>
</feature>
<feature type="compositionally biased region" description="Basic residues" evidence="7">
    <location>
        <begin position="130"/>
        <end position="153"/>
    </location>
</feature>
<feature type="compositionally biased region" description="Polar residues" evidence="7">
    <location>
        <begin position="156"/>
        <end position="177"/>
    </location>
</feature>
<feature type="compositionally biased region" description="Polar residues" evidence="7">
    <location>
        <begin position="341"/>
        <end position="350"/>
    </location>
</feature>
<feature type="compositionally biased region" description="Low complexity" evidence="7">
    <location>
        <begin position="489"/>
        <end position="499"/>
    </location>
</feature>
<feature type="compositionally biased region" description="Acidic residues" evidence="7">
    <location>
        <begin position="500"/>
        <end position="510"/>
    </location>
</feature>
<feature type="compositionally biased region" description="Low complexity" evidence="7">
    <location>
        <begin position="640"/>
        <end position="659"/>
    </location>
</feature>
<feature type="compositionally biased region" description="Polar residues" evidence="7">
    <location>
        <begin position="664"/>
        <end position="673"/>
    </location>
</feature>
<feature type="compositionally biased region" description="Polar residues" evidence="7">
    <location>
        <begin position="692"/>
        <end position="701"/>
    </location>
</feature>
<feature type="compositionally biased region" description="Polar residues" evidence="7">
    <location>
        <begin position="752"/>
        <end position="775"/>
    </location>
</feature>
<feature type="compositionally biased region" description="Polar residues" evidence="7">
    <location>
        <begin position="1049"/>
        <end position="1063"/>
    </location>
</feature>
<feature type="compositionally biased region" description="Basic and acidic residues" evidence="7">
    <location>
        <begin position="1085"/>
        <end position="1094"/>
    </location>
</feature>
<feature type="compositionally biased region" description="Polar residues" evidence="7">
    <location>
        <begin position="1214"/>
        <end position="1223"/>
    </location>
</feature>
<feature type="compositionally biased region" description="Basic and acidic residues" evidence="7">
    <location>
        <begin position="1621"/>
        <end position="1630"/>
    </location>
</feature>
<feature type="compositionally biased region" description="Polar residues" evidence="7">
    <location>
        <begin position="1639"/>
        <end position="1662"/>
    </location>
</feature>
<feature type="compositionally biased region" description="Basic and acidic residues" evidence="7">
    <location>
        <begin position="1668"/>
        <end position="1687"/>
    </location>
</feature>
<feature type="compositionally biased region" description="Basic and acidic residues" evidence="7">
    <location>
        <begin position="1704"/>
        <end position="1714"/>
    </location>
</feature>
<feature type="compositionally biased region" description="Basic and acidic residues" evidence="7">
    <location>
        <begin position="1786"/>
        <end position="1795"/>
    </location>
</feature>
<feature type="compositionally biased region" description="Polar residues" evidence="7">
    <location>
        <begin position="1796"/>
        <end position="1808"/>
    </location>
</feature>
<feature type="compositionally biased region" description="Basic and acidic residues" evidence="7">
    <location>
        <begin position="1935"/>
        <end position="1955"/>
    </location>
</feature>
<feature type="compositionally biased region" description="Polar residues" evidence="7">
    <location>
        <begin position="1956"/>
        <end position="1980"/>
    </location>
</feature>
<feature type="compositionally biased region" description="Basic and acidic residues" evidence="7">
    <location>
        <begin position="2085"/>
        <end position="2124"/>
    </location>
</feature>
<feature type="compositionally biased region" description="Polar residues" evidence="7">
    <location>
        <begin position="2145"/>
        <end position="2155"/>
    </location>
</feature>
<feature type="compositionally biased region" description="Basic and acidic residues" evidence="7">
    <location>
        <begin position="2162"/>
        <end position="2172"/>
    </location>
</feature>
<feature type="compositionally biased region" description="Basic and acidic residues" evidence="7">
    <location>
        <begin position="2232"/>
        <end position="2250"/>
    </location>
</feature>
<feature type="compositionally biased region" description="Polar residues" evidence="7">
    <location>
        <begin position="2387"/>
        <end position="2399"/>
    </location>
</feature>
<feature type="compositionally biased region" description="Basic and acidic residues" evidence="7">
    <location>
        <begin position="2441"/>
        <end position="2461"/>
    </location>
</feature>
<feature type="compositionally biased region" description="Basic and acidic residues" evidence="7">
    <location>
        <begin position="2661"/>
        <end position="2681"/>
    </location>
</feature>
<feature type="compositionally biased region" description="Basic and acidic residues" evidence="7">
    <location>
        <begin position="2750"/>
        <end position="2769"/>
    </location>
</feature>
<feature type="compositionally biased region" description="Basic and acidic residues" evidence="7">
    <location>
        <begin position="2777"/>
        <end position="2804"/>
    </location>
</feature>
<feature type="compositionally biased region" description="Basic and acidic residues" evidence="7">
    <location>
        <begin position="2830"/>
        <end position="2847"/>
    </location>
</feature>
<feature type="compositionally biased region" description="Basic and acidic residues" evidence="7">
    <location>
        <begin position="3015"/>
        <end position="3031"/>
    </location>
</feature>
<feature type="compositionally biased region" description="Polar residues" evidence="7">
    <location>
        <begin position="3128"/>
        <end position="3138"/>
    </location>
</feature>
<feature type="compositionally biased region" description="Basic and acidic residues" evidence="7">
    <location>
        <begin position="3139"/>
        <end position="3150"/>
    </location>
</feature>
<feature type="compositionally biased region" description="Polar residues" evidence="7">
    <location>
        <begin position="3213"/>
        <end position="3227"/>
    </location>
</feature>
<feature type="compositionally biased region" description="Basic and acidic residues" evidence="7">
    <location>
        <begin position="3477"/>
        <end position="3489"/>
    </location>
</feature>
<feature type="modified residue" description="Phosphoserine" evidence="3">
    <location>
        <position position="155"/>
    </location>
</feature>
<feature type="modified residue" description="Phosphoserine" evidence="3">
    <location>
        <position position="631"/>
    </location>
</feature>
<feature type="modified residue" description="Phosphoserine" evidence="3">
    <location>
        <position position="2404"/>
    </location>
</feature>
<feature type="modified residue" description="Phosphoserine" evidence="3">
    <location>
        <position position="2813"/>
    </location>
</feature>
<feature type="modified residue" description="Phosphoserine" evidence="3">
    <location>
        <position position="3228"/>
    </location>
</feature>
<feature type="sequence variant" id="VAR_042471" description="In dbSNP:rs16877109.">
    <original>Y</original>
    <variation>C</variation>
    <location>
        <position position="64"/>
    </location>
</feature>
<feature type="sequence variant" id="VAR_042472" description="In dbSNP:rs6895605.">
    <original>Q</original>
    <variation>H</variation>
    <location>
        <position position="175"/>
    </location>
</feature>
<feature type="sequence variant" id="VAR_042473" description="In dbSNP:rs10942901." evidence="12">
    <original>D</original>
    <variation>G</variation>
    <location>
        <position position="190"/>
    </location>
</feature>
<feature type="sequence variant" id="VAR_042474" description="In dbSNP:rs1366271.">
    <original>G</original>
    <variation>D</variation>
    <location>
        <position position="349"/>
    </location>
</feature>
<feature type="sequence variant" id="VAR_042475" description="In dbSNP:rs16877124.">
    <original>G</original>
    <variation>D</variation>
    <location>
        <position position="591"/>
    </location>
</feature>
<feature type="sequence variant" id="VAR_061611" description="In dbSNP:rs57544556.">
    <original>S</original>
    <variation>R</variation>
    <location>
        <position position="651"/>
    </location>
</feature>
<feature type="sequence variant" id="VAR_042476" description="In dbSNP:rs6893869.">
    <original>V</original>
    <variation>A</variation>
    <location>
        <position position="1006"/>
    </location>
</feature>
<feature type="sequence variant" id="VAR_042477" description="In dbSNP:rs4704585." evidence="12">
    <original>A</original>
    <variation>V</variation>
    <location>
        <position position="1295"/>
    </location>
</feature>
<feature type="sequence variant" id="VAR_042478" description="In dbSNP:rs16877133.">
    <original>I</original>
    <variation>V</variation>
    <location>
        <position position="1309"/>
    </location>
</feature>
<feature type="sequence variant" id="VAR_042479" description="In dbSNP:rs16877135.">
    <original>A</original>
    <variation>V</variation>
    <location>
        <position position="1333"/>
    </location>
</feature>
<feature type="sequence variant" id="VAR_042480" description="In dbSNP:rs13158477.">
    <original>I</original>
    <variation>V</variation>
    <location>
        <position position="1380"/>
    </location>
</feature>
<feature type="sequence variant" id="VAR_042481" description="In dbSNP:rs1428223.">
    <original>A</original>
    <variation>E</variation>
    <location>
        <position position="1567"/>
    </location>
</feature>
<feature type="sequence variant" id="VAR_042482" description="In dbSNP:rs1428224.">
    <original>S</original>
    <variation>A</variation>
    <location>
        <position position="1599"/>
    </location>
</feature>
<feature type="sequence variant" id="VAR_042483" description="In dbSNP:rs1019762.">
    <original>L</original>
    <variation>S</variation>
    <location>
        <position position="1669"/>
    </location>
</feature>
<feature type="sequence variant" id="VAR_042484" description="In dbSNP:rs16877141.">
    <original>I</original>
    <variation>N</variation>
    <location>
        <position position="1713"/>
    </location>
</feature>
<feature type="sequence variant" id="VAR_042485" description="In dbSNP:rs1428225.">
    <original>I</original>
    <variation>V</variation>
    <location>
        <position position="1721"/>
    </location>
</feature>
<feature type="sequence variant" id="VAR_042486" description="In dbSNP:rs16877147.">
    <original>A</original>
    <variation>V</variation>
    <location>
        <position position="1875"/>
    </location>
</feature>
<feature type="sequence variant" id="VAR_042487" description="In dbSNP:rs16877150.">
    <original>D</original>
    <variation>G</variation>
    <location>
        <position position="1917"/>
    </location>
</feature>
<feature type="sequence variant" id="VAR_042488" description="In dbSNP:rs16877151." evidence="10">
    <original>S</original>
    <variation>G</variation>
    <location>
        <position position="1920"/>
    </location>
</feature>
<feature type="sequence variant" id="VAR_042489" description="In dbSNP:rs6859595." evidence="10">
    <original>V</original>
    <variation>L</variation>
    <location>
        <position position="2262"/>
    </location>
</feature>
<feature type="sequence variant" id="VAR_042490" description="In dbSNP:rs7721884.">
    <original>K</original>
    <variation>E</variation>
    <location>
        <position position="2383"/>
    </location>
</feature>
<feature type="sequence variant" id="VAR_042491" description="In dbSNP:rs28362541.">
    <original>T</original>
    <variation>I</variation>
    <location>
        <position position="2693"/>
    </location>
</feature>
<feature type="sequence variant" id="VAR_042492" description="In dbSNP:rs2278239.">
    <original>K</original>
    <variation>N</variation>
    <location>
        <position position="2906"/>
    </location>
</feature>
<feature type="sequence variant" id="VAR_042493" description="In dbSNP:rs2278240.">
    <original>G</original>
    <variation>R</variation>
    <location>
        <position position="2935"/>
    </location>
</feature>
<feature type="sequence variant" id="VAR_042494" description="In dbSNP:rs3828611." evidence="10">
    <original>H</original>
    <variation>Q</variation>
    <location>
        <position position="3358"/>
    </location>
</feature>
<feature type="sequence variant" id="VAR_042495" description="In dbSNP:rs12514461." evidence="10 12">
    <original>K</original>
    <variation>E</variation>
    <location>
        <position position="3583"/>
    </location>
</feature>
<feature type="sequence variant" id="VAR_042496" description="In dbSNP:rs1129770." evidence="10 14">
    <original>R</original>
    <variation>Q</variation>
    <location>
        <position position="3927"/>
    </location>
</feature>
<feature type="sequence variant" id="VAR_042497" description="In dbSNP:rs10043986." evidence="12">
    <original>P</original>
    <variation>L</variation>
    <location>
        <position position="4063"/>
    </location>
</feature>
<feature type="sequence conflict" description="In Ref. 2; CAH10406." evidence="16" ref="2">
    <original>E</original>
    <variation>D</variation>
    <location>
        <position position="79"/>
    </location>
</feature>
<feature type="sequence conflict" description="In Ref. 2; CAH10406." evidence="16" ref="2">
    <original>A</original>
    <variation>V</variation>
    <location>
        <position position="445"/>
    </location>
</feature>
<feature type="sequence conflict" description="In Ref. 2; CAH10402." evidence="16" ref="2">
    <original>V</original>
    <variation>I</variation>
    <location>
        <position position="616"/>
    </location>
</feature>
<feature type="sequence conflict" description="In Ref. 2; CAH10406." evidence="16" ref="2">
    <original>S</original>
    <variation>L</variation>
    <location>
        <position position="654"/>
    </location>
</feature>
<feature type="sequence conflict" description="In Ref. 2; CAH10402." evidence="16" ref="2">
    <original>N</original>
    <variation>D</variation>
    <location>
        <position position="924"/>
    </location>
</feature>
<feature type="sequence conflict" description="In Ref. 2; CAH10406." evidence="16" ref="2">
    <original>A</original>
    <variation>T</variation>
    <location>
        <position position="995"/>
    </location>
</feature>
<feature type="sequence conflict" description="In Ref. 2; CAH10406." evidence="16" ref="2">
    <original>S</original>
    <variation>P</variation>
    <location>
        <position position="1283"/>
    </location>
</feature>
<feature type="sequence conflict" description="In Ref. 2; CAH10406." evidence="16" ref="2">
    <original>F</original>
    <variation>L</variation>
    <location>
        <position position="1606"/>
    </location>
</feature>
<feature type="sequence conflict" description="In Ref. 2; CAH10406." evidence="16" ref="2">
    <original>G</original>
    <variation>E</variation>
    <location>
        <position position="1681"/>
    </location>
</feature>
<feature type="sequence conflict" description="In Ref. 3; AAH63134." evidence="16" ref="3">
    <original>S</original>
    <variation>G</variation>
    <location>
        <position position="1855"/>
    </location>
</feature>
<feature type="sequence conflict" description="In Ref. 3; AAH63134." evidence="16" ref="3">
    <original>E</original>
    <variation>K</variation>
    <location>
        <position position="2038"/>
    </location>
</feature>
<feature type="sequence conflict" description="In Ref. 5; AAD55265." evidence="16" ref="5">
    <original>S</original>
    <variation>A</variation>
    <location>
        <position position="2148"/>
    </location>
</feature>
<feature type="sequence conflict" description="In Ref. 5; AAD55265." evidence="16" ref="5">
    <original>G</original>
    <variation>D</variation>
    <location>
        <position position="2538"/>
    </location>
</feature>
<feature type="sequence conflict" description="In Ref. 2; CAD38607." evidence="16" ref="2">
    <original>MKE</original>
    <variation>TKD</variation>
    <location>
        <begin position="2782"/>
        <end position="2784"/>
    </location>
</feature>
<feature type="sequence conflict" description="In Ref. 2; CAD38928." evidence="16" ref="2">
    <original>S</original>
    <variation>P</variation>
    <location>
        <position position="2788"/>
    </location>
</feature>
<feature type="sequence conflict" description="In Ref. 2; CAD38607." evidence="16" ref="2">
    <original>P</original>
    <variation>L</variation>
    <location>
        <position position="2933"/>
    </location>
</feature>
<feature type="sequence conflict" description="In Ref. 3; AAH62664." evidence="16" ref="3">
    <original>PQKLNVEEKLSKEVTEETISFPVSSVESALEHEYDLVKLDE</original>
    <variation>SFKTIPLPDDSETVACHKTLKSRLEDEKVTPLKENKQKETQ</variation>
    <location>
        <begin position="3073"/>
        <end position="3113"/>
    </location>
</feature>
<feature type="sequence conflict" description="In Ref. 6; AAQ09018." evidence="16" ref="6">
    <original>Q</original>
    <variation>L</variation>
    <location>
        <position position="3131"/>
    </location>
</feature>
<feature type="sequence conflict" description="In Ref. 2; CAD91143." evidence="16" ref="2">
    <original>R</original>
    <variation>W</variation>
    <location>
        <position position="3291"/>
    </location>
</feature>
<feature type="sequence conflict" description="In Ref. 2; CAD91143." evidence="16" ref="2">
    <original>K</original>
    <variation>R</variation>
    <location>
        <position position="3321"/>
    </location>
</feature>
<feature type="sequence conflict" description="In Ref. 2; CAD91158." evidence="16" ref="2">
    <original>V</original>
    <variation>A</variation>
    <location>
        <position position="3331"/>
    </location>
</feature>
<feature type="sequence conflict" description="In Ref. 2; CAD91158." evidence="16" ref="2">
    <original>V</original>
    <variation>A</variation>
    <location>
        <position position="3348"/>
    </location>
</feature>
<feature type="sequence conflict" description="In Ref. 2; CAD91158." evidence="16" ref="2">
    <original>E</original>
    <variation>G</variation>
    <location>
        <position position="3361"/>
    </location>
</feature>
<feature type="sequence conflict" description="In Ref. 2; CAD91143." evidence="16" ref="2">
    <original>APSTPVIRAEDCTVCWNTAT</original>
    <variation>GKEMDAKGALEDNAQFFTDS</variation>
    <location>
        <begin position="3803"/>
        <end position="3822"/>
    </location>
</feature>
<feature type="sequence conflict" description="In Ref. 2; CAD91158." evidence="16" ref="2">
    <original>R</original>
    <variation>S</variation>
    <location>
        <position position="3852"/>
    </location>
</feature>
<feature type="sequence conflict" description="In Ref. 2; CAD91158." evidence="16" ref="2">
    <original>N</original>
    <variation>S</variation>
    <location>
        <position position="3880"/>
    </location>
</feature>
<feature type="sequence conflict" description="In Ref. 2; CAD91158." evidence="16" ref="2">
    <original>T</original>
    <variation>A</variation>
    <location>
        <position position="3929"/>
    </location>
</feature>
<feature type="sequence conflict" description="In Ref. 2; CAD91158." evidence="16" ref="2">
    <original>E</original>
    <variation>K</variation>
    <location>
        <position position="3948"/>
    </location>
</feature>
<feature type="sequence conflict" description="In Ref. 2; CAD38607." evidence="16" ref="2">
    <original>K</original>
    <variation>E</variation>
    <location>
        <position position="4050"/>
    </location>
</feature>
<organism>
    <name type="scientific">Homo sapiens</name>
    <name type="common">Human</name>
    <dbReference type="NCBI Taxonomy" id="9606"/>
    <lineage>
        <taxon>Eukaryota</taxon>
        <taxon>Metazoa</taxon>
        <taxon>Chordata</taxon>
        <taxon>Craniata</taxon>
        <taxon>Vertebrata</taxon>
        <taxon>Euteleostomi</taxon>
        <taxon>Mammalia</taxon>
        <taxon>Eutheria</taxon>
        <taxon>Euarchontoglires</taxon>
        <taxon>Primates</taxon>
        <taxon>Haplorrhini</taxon>
        <taxon>Catarrhini</taxon>
        <taxon>Hominidae</taxon>
        <taxon>Homo</taxon>
    </lineage>
</organism>